<protein>
    <recommendedName>
        <fullName>Serine protease 30</fullName>
        <ecNumber>3.4.21.-</ecNumber>
    </recommendedName>
    <alternativeName>
        <fullName>Distal intestinal serine protease</fullName>
    </alternativeName>
    <alternativeName>
        <fullName>Transmembrane serine protease 8</fullName>
    </alternativeName>
</protein>
<name>PRS30_MOUSE</name>
<accession>Q9QYZ9</accession>
<accession>Q91XC4</accession>
<feature type="signal peptide" evidence="3">
    <location>
        <begin position="1"/>
        <end position="21"/>
    </location>
</feature>
<feature type="propeptide" id="PRO_0000027861" description="Activation peptide" evidence="2 3">
    <location>
        <begin position="22"/>
        <end position="36"/>
    </location>
</feature>
<feature type="chain" id="PRO_0000027862" description="Serine protease 30">
    <location>
        <begin position="37"/>
        <end position="281"/>
    </location>
</feature>
<feature type="propeptide" id="PRO_0000027863" description="Removed in mature form" evidence="6">
    <location>
        <begin position="282"/>
        <end position="310"/>
    </location>
</feature>
<feature type="domain" description="Peptidase S1" evidence="4">
    <location>
        <begin position="37"/>
        <end position="277"/>
    </location>
</feature>
<feature type="active site" description="Charge relay system" evidence="1">
    <location>
        <position position="78"/>
    </location>
</feature>
<feature type="active site" description="Charge relay system" evidence="1">
    <location>
        <position position="128"/>
    </location>
</feature>
<feature type="active site" description="Charge relay system" evidence="1">
    <location>
        <position position="229"/>
    </location>
</feature>
<feature type="lipid moiety-binding region" description="GPI-anchor amidated serine" evidence="3">
    <location>
        <position position="281"/>
    </location>
</feature>
<feature type="glycosylation site" description="N-linked (GlcNAc...) asparagine" evidence="3">
    <location>
        <position position="238"/>
    </location>
</feature>
<feature type="glycosylation site" description="N-linked (GlcNAc...) asparagine" evidence="3">
    <location>
        <position position="279"/>
    </location>
</feature>
<feature type="disulfide bond" evidence="1 4">
    <location>
        <begin position="63"/>
        <end position="79"/>
    </location>
</feature>
<feature type="disulfide bond" evidence="1 4">
    <location>
        <begin position="161"/>
        <end position="235"/>
    </location>
</feature>
<feature type="disulfide bond" evidence="1 4">
    <location>
        <begin position="191"/>
        <end position="214"/>
    </location>
</feature>
<feature type="disulfide bond" evidence="1 4">
    <location>
        <begin position="225"/>
        <end position="253"/>
    </location>
</feature>
<feature type="sequence conflict" description="In Ref. 1; CAB56465." evidence="6" ref="1">
    <original>QK</original>
    <variation>HI</variation>
    <location>
        <begin position="221"/>
        <end position="222"/>
    </location>
</feature>
<keyword id="KW-1003">Cell membrane</keyword>
<keyword id="KW-1015">Disulfide bond</keyword>
<keyword id="KW-0325">Glycoprotein</keyword>
<keyword id="KW-0336">GPI-anchor</keyword>
<keyword id="KW-0378">Hydrolase</keyword>
<keyword id="KW-0406">Ion transport</keyword>
<keyword id="KW-0449">Lipoprotein</keyword>
<keyword id="KW-0472">Membrane</keyword>
<keyword id="KW-0645">Protease</keyword>
<keyword id="KW-1185">Reference proteome</keyword>
<keyword id="KW-0720">Serine protease</keyword>
<keyword id="KW-0732">Signal</keyword>
<keyword id="KW-0915">Sodium</keyword>
<keyword id="KW-0739">Sodium transport</keyword>
<keyword id="KW-0813">Transport</keyword>
<keyword id="KW-0865">Zymogen</keyword>
<sequence>MESRARCIFLLLLQILTRARGDILPSVCGHSRDAGKIVGGQDALEGQWPWQVSLWITEDGHICGGSLIHEVWVLTAAHCFRRSLNPSFYHVKVGGLTLSLLEPHSTLVAVRNIFVHPTYLWADASSGDIALVQLDTPLRPSQFTPVCLPAAQTPLTPGTVCWVTGWGATQERDMASVLQELAVPLLDSEDCEKMYHTQGSSLSGERIIQSDMLCAGYVEGQKDSCQGDSGGPLVCSINSSWTQVGITSWGIGCARPYRPGVYTRVPTYVDWIQRILAENHSDAYGYHSSASAAYQMLLPVLLAVALPGSL</sequence>
<reference evidence="6" key="1">
    <citation type="journal article" date="2000" name="Biochim. Biophys. Acta">
        <title>Characterization of a novel murine intestinal serine protease, DISP.</title>
        <authorList>
            <person name="Shaw-Smith C.J."/>
            <person name="Coffey A.J."/>
            <person name="Leversha M."/>
            <person name="Freeman T.C."/>
            <person name="Bentley D.R."/>
            <person name="Walters J.R.F."/>
        </authorList>
    </citation>
    <scope>NUCLEOTIDE SEQUENCE [MRNA]</scope>
    <scope>TISSUE SPECIFICITY</scope>
    <source>
        <strain evidence="5">C57BL/6J</strain>
        <tissue evidence="5">Small intestine</tissue>
    </source>
</reference>
<reference evidence="6" key="2">
    <citation type="journal article" date="2004" name="Genome Res.">
        <title>The status, quality, and expansion of the NIH full-length cDNA project: the Mammalian Gene Collection (MGC).</title>
        <authorList>
            <consortium name="The MGC Project Team"/>
        </authorList>
    </citation>
    <scope>NUCLEOTIDE SEQUENCE [LARGE SCALE MRNA]</scope>
    <source>
        <strain evidence="7">FVB/N</strain>
        <tissue evidence="7">Colon</tissue>
    </source>
</reference>
<gene>
    <name type="primary">Prss30</name>
    <name evidence="8" type="synonym">Disp</name>
    <name type="synonym">Tmprss8</name>
</gene>
<organism>
    <name type="scientific">Mus musculus</name>
    <name type="common">Mouse</name>
    <dbReference type="NCBI Taxonomy" id="10090"/>
    <lineage>
        <taxon>Eukaryota</taxon>
        <taxon>Metazoa</taxon>
        <taxon>Chordata</taxon>
        <taxon>Craniata</taxon>
        <taxon>Vertebrata</taxon>
        <taxon>Euteleostomi</taxon>
        <taxon>Mammalia</taxon>
        <taxon>Eutheria</taxon>
        <taxon>Euarchontoglires</taxon>
        <taxon>Glires</taxon>
        <taxon>Rodentia</taxon>
        <taxon>Myomorpha</taxon>
        <taxon>Muroidea</taxon>
        <taxon>Muridae</taxon>
        <taxon>Murinae</taxon>
        <taxon>Mus</taxon>
        <taxon>Mus</taxon>
    </lineage>
</organism>
<proteinExistence type="evidence at transcript level"/>
<evidence type="ECO:0000250" key="1">
    <source>
        <dbReference type="UniProtKB" id="P49863"/>
    </source>
</evidence>
<evidence type="ECO:0000250" key="2">
    <source>
        <dbReference type="UniProtKB" id="P83748"/>
    </source>
</evidence>
<evidence type="ECO:0000255" key="3"/>
<evidence type="ECO:0000255" key="4">
    <source>
        <dbReference type="PROSITE-ProRule" id="PRU00274"/>
    </source>
</evidence>
<evidence type="ECO:0000269" key="5">
    <source>
    </source>
</evidence>
<evidence type="ECO:0000305" key="6"/>
<evidence type="ECO:0000312" key="7">
    <source>
        <dbReference type="EMBL" id="AAH10970.1"/>
    </source>
</evidence>
<evidence type="ECO:0000312" key="8">
    <source>
        <dbReference type="MGI" id="MGI:1353645"/>
    </source>
</evidence>
<comment type="function">
    <text evidence="2">Selectively cleaves synthetic peptide substrates of trypsin. Activates the epithelial sodium channel ENaC (By similarity).</text>
</comment>
<comment type="activity regulation">
    <text evidence="2">Inhibited by aprotinin, leupeptin, benzamidine and soybean trypsin inhibitor. Partially inhibited by PMSF and DFP (By similarity).</text>
</comment>
<comment type="subcellular location">
    <subcellularLocation>
        <location evidence="6">Cell membrane</location>
        <topology evidence="6">Lipid-anchor</topology>
        <topology evidence="6">GPI-anchor</topology>
    </subcellularLocation>
</comment>
<comment type="tissue specificity">
    <text evidence="5">Expressed primarily in distal gut.</text>
</comment>
<comment type="similarity">
    <text evidence="4">Belongs to the peptidase S1 family.</text>
</comment>
<dbReference type="EC" id="3.4.21.-"/>
<dbReference type="EMBL" id="AJ243866">
    <property type="protein sequence ID" value="CAB56465.1"/>
    <property type="molecule type" value="mRNA"/>
</dbReference>
<dbReference type="EMBL" id="BC010970">
    <property type="protein sequence ID" value="AAH10970.1"/>
    <property type="molecule type" value="mRNA"/>
</dbReference>
<dbReference type="EMBL" id="BC040348">
    <property type="protein sequence ID" value="AAH40348.1"/>
    <property type="molecule type" value="mRNA"/>
</dbReference>
<dbReference type="CCDS" id="CCDS28470.1"/>
<dbReference type="RefSeq" id="NP_038949.2">
    <property type="nucleotide sequence ID" value="NM_013921.3"/>
</dbReference>
<dbReference type="RefSeq" id="XP_006524445.1">
    <property type="nucleotide sequence ID" value="XM_006524382.4"/>
</dbReference>
<dbReference type="SMR" id="Q9QYZ9"/>
<dbReference type="FunCoup" id="Q9QYZ9">
    <property type="interactions" value="134"/>
</dbReference>
<dbReference type="STRING" id="10090.ENSMUSP00000157077"/>
<dbReference type="MEROPS" id="S01.042"/>
<dbReference type="GlyCosmos" id="Q9QYZ9">
    <property type="glycosylation" value="2 sites, No reported glycans"/>
</dbReference>
<dbReference type="GlyGen" id="Q9QYZ9">
    <property type="glycosylation" value="3 sites, 1 N-linked glycan (1 site), 1 O-linked glycan (1 site)"/>
</dbReference>
<dbReference type="PaxDb" id="10090-ENSMUSP00000024936"/>
<dbReference type="ProteomicsDB" id="291674"/>
<dbReference type="DNASU" id="30943"/>
<dbReference type="Ensembl" id="ENSMUST00000024936.11">
    <property type="protein sequence ID" value="ENSMUSP00000024936.4"/>
    <property type="gene ID" value="ENSMUSG00000024124.11"/>
</dbReference>
<dbReference type="Ensembl" id="ENSMUST00000234765.2">
    <property type="protein sequence ID" value="ENSMUSP00000157077.2"/>
    <property type="gene ID" value="ENSMUSG00000024124.11"/>
</dbReference>
<dbReference type="GeneID" id="30943"/>
<dbReference type="KEGG" id="mmu:30943"/>
<dbReference type="UCSC" id="uc008aue.2">
    <property type="organism name" value="mouse"/>
</dbReference>
<dbReference type="AGR" id="MGI:1353645"/>
<dbReference type="CTD" id="30943"/>
<dbReference type="MGI" id="MGI:1353645">
    <property type="gene designation" value="Prss30"/>
</dbReference>
<dbReference type="VEuPathDB" id="HostDB:ENSMUSG00000024124"/>
<dbReference type="eggNOG" id="KOG3627">
    <property type="taxonomic scope" value="Eukaryota"/>
</dbReference>
<dbReference type="GeneTree" id="ENSGT00940000160305"/>
<dbReference type="HOGENOM" id="CLU_006842_0_4_1"/>
<dbReference type="InParanoid" id="Q9QYZ9"/>
<dbReference type="OMA" id="TSEGHIC"/>
<dbReference type="OrthoDB" id="93664at2759"/>
<dbReference type="PhylomeDB" id="Q9QYZ9"/>
<dbReference type="TreeFam" id="TF351676"/>
<dbReference type="BioGRID-ORCS" id="30943">
    <property type="hits" value="5 hits in 76 CRISPR screens"/>
</dbReference>
<dbReference type="PRO" id="PR:Q9QYZ9"/>
<dbReference type="Proteomes" id="UP000000589">
    <property type="component" value="Chromosome 17"/>
</dbReference>
<dbReference type="RNAct" id="Q9QYZ9">
    <property type="molecule type" value="protein"/>
</dbReference>
<dbReference type="Bgee" id="ENSMUSG00000024124">
    <property type="expression patterns" value="Expressed in right colon and 29 other cell types or tissues"/>
</dbReference>
<dbReference type="ExpressionAtlas" id="Q9QYZ9">
    <property type="expression patterns" value="baseline and differential"/>
</dbReference>
<dbReference type="GO" id="GO:0005886">
    <property type="term" value="C:plasma membrane"/>
    <property type="evidence" value="ECO:0007669"/>
    <property type="project" value="UniProtKB-SubCell"/>
</dbReference>
<dbReference type="GO" id="GO:0098552">
    <property type="term" value="C:side of membrane"/>
    <property type="evidence" value="ECO:0007669"/>
    <property type="project" value="UniProtKB-KW"/>
</dbReference>
<dbReference type="GO" id="GO:0004252">
    <property type="term" value="F:serine-type endopeptidase activity"/>
    <property type="evidence" value="ECO:0000250"/>
    <property type="project" value="UniProtKB"/>
</dbReference>
<dbReference type="GO" id="GO:0008236">
    <property type="term" value="F:serine-type peptidase activity"/>
    <property type="evidence" value="ECO:0000247"/>
    <property type="project" value="MGI"/>
</dbReference>
<dbReference type="GO" id="GO:0017080">
    <property type="term" value="F:sodium channel regulator activity"/>
    <property type="evidence" value="ECO:0000250"/>
    <property type="project" value="UniProtKB"/>
</dbReference>
<dbReference type="GO" id="GO:0006508">
    <property type="term" value="P:proteolysis"/>
    <property type="evidence" value="ECO:0000250"/>
    <property type="project" value="UniProtKB"/>
</dbReference>
<dbReference type="GO" id="GO:0006814">
    <property type="term" value="P:sodium ion transport"/>
    <property type="evidence" value="ECO:0000250"/>
    <property type="project" value="UniProtKB"/>
</dbReference>
<dbReference type="CDD" id="cd00190">
    <property type="entry name" value="Tryp_SPc"/>
    <property type="match status" value="1"/>
</dbReference>
<dbReference type="FunFam" id="2.40.10.10:FF:000039">
    <property type="entry name" value="Brain-specific serine protease 4"/>
    <property type="match status" value="1"/>
</dbReference>
<dbReference type="Gene3D" id="2.40.10.10">
    <property type="entry name" value="Trypsin-like serine proteases"/>
    <property type="match status" value="1"/>
</dbReference>
<dbReference type="InterPro" id="IPR009003">
    <property type="entry name" value="Peptidase_S1_PA"/>
</dbReference>
<dbReference type="InterPro" id="IPR043504">
    <property type="entry name" value="Peptidase_S1_PA_chymotrypsin"/>
</dbReference>
<dbReference type="InterPro" id="IPR001314">
    <property type="entry name" value="Peptidase_S1A"/>
</dbReference>
<dbReference type="InterPro" id="IPR001254">
    <property type="entry name" value="Trypsin_dom"/>
</dbReference>
<dbReference type="InterPro" id="IPR018114">
    <property type="entry name" value="TRYPSIN_HIS"/>
</dbReference>
<dbReference type="InterPro" id="IPR033116">
    <property type="entry name" value="TRYPSIN_SER"/>
</dbReference>
<dbReference type="PANTHER" id="PTHR24253:SF170">
    <property type="entry name" value="PEPTIDASE S1 DOMAIN-CONTAINING PROTEIN"/>
    <property type="match status" value="1"/>
</dbReference>
<dbReference type="PANTHER" id="PTHR24253">
    <property type="entry name" value="TRANSMEMBRANE PROTEASE SERINE"/>
    <property type="match status" value="1"/>
</dbReference>
<dbReference type="Pfam" id="PF00089">
    <property type="entry name" value="Trypsin"/>
    <property type="match status" value="1"/>
</dbReference>
<dbReference type="PRINTS" id="PR00722">
    <property type="entry name" value="CHYMOTRYPSIN"/>
</dbReference>
<dbReference type="SMART" id="SM00020">
    <property type="entry name" value="Tryp_SPc"/>
    <property type="match status" value="1"/>
</dbReference>
<dbReference type="SUPFAM" id="SSF50494">
    <property type="entry name" value="Trypsin-like serine proteases"/>
    <property type="match status" value="1"/>
</dbReference>
<dbReference type="PROSITE" id="PS50240">
    <property type="entry name" value="TRYPSIN_DOM"/>
    <property type="match status" value="1"/>
</dbReference>
<dbReference type="PROSITE" id="PS00134">
    <property type="entry name" value="TRYPSIN_HIS"/>
    <property type="match status" value="1"/>
</dbReference>
<dbReference type="PROSITE" id="PS00135">
    <property type="entry name" value="TRYPSIN_SER"/>
    <property type="match status" value="1"/>
</dbReference>